<reference key="1">
    <citation type="journal article" date="2006" name="Nat. Biotechnol.">
        <title>Complete genome of the mutualistic, N2-fixing grass endophyte Azoarcus sp. strain BH72.</title>
        <authorList>
            <person name="Krause A."/>
            <person name="Ramakumar A."/>
            <person name="Bartels D."/>
            <person name="Battistoni F."/>
            <person name="Bekel T."/>
            <person name="Boch J."/>
            <person name="Boehm M."/>
            <person name="Friedrich F."/>
            <person name="Hurek T."/>
            <person name="Krause L."/>
            <person name="Linke B."/>
            <person name="McHardy A.C."/>
            <person name="Sarkar A."/>
            <person name="Schneiker S."/>
            <person name="Syed A.A."/>
            <person name="Thauer R."/>
            <person name="Vorhoelter F.-J."/>
            <person name="Weidner S."/>
            <person name="Puehler A."/>
            <person name="Reinhold-Hurek B."/>
            <person name="Kaiser O."/>
            <person name="Goesmann A."/>
        </authorList>
    </citation>
    <scope>NUCLEOTIDE SEQUENCE [LARGE SCALE GENOMIC DNA]</scope>
    <source>
        <strain>BH72</strain>
    </source>
</reference>
<keyword id="KW-0998">Cell outer membrane</keyword>
<keyword id="KW-0472">Membrane</keyword>
<keyword id="KW-1185">Reference proteome</keyword>
<keyword id="KW-0732">Signal</keyword>
<dbReference type="EMBL" id="AM406670">
    <property type="protein sequence ID" value="CAL95503.1"/>
    <property type="status" value="ALT_INIT"/>
    <property type="molecule type" value="Genomic_DNA"/>
</dbReference>
<dbReference type="SMR" id="A1K9J8"/>
<dbReference type="STRING" id="62928.azo2887"/>
<dbReference type="KEGG" id="azo:azo2887"/>
<dbReference type="eggNOG" id="COG1452">
    <property type="taxonomic scope" value="Bacteria"/>
</dbReference>
<dbReference type="HOGENOM" id="CLU_009039_0_0_4"/>
<dbReference type="Proteomes" id="UP000002588">
    <property type="component" value="Chromosome"/>
</dbReference>
<dbReference type="GO" id="GO:0009279">
    <property type="term" value="C:cell outer membrane"/>
    <property type="evidence" value="ECO:0007669"/>
    <property type="project" value="UniProtKB-SubCell"/>
</dbReference>
<dbReference type="GO" id="GO:1990351">
    <property type="term" value="C:transporter complex"/>
    <property type="evidence" value="ECO:0007669"/>
    <property type="project" value="TreeGrafter"/>
</dbReference>
<dbReference type="GO" id="GO:0043165">
    <property type="term" value="P:Gram-negative-bacterium-type cell outer membrane assembly"/>
    <property type="evidence" value="ECO:0007669"/>
    <property type="project" value="UniProtKB-UniRule"/>
</dbReference>
<dbReference type="GO" id="GO:0015920">
    <property type="term" value="P:lipopolysaccharide transport"/>
    <property type="evidence" value="ECO:0007669"/>
    <property type="project" value="InterPro"/>
</dbReference>
<dbReference type="HAMAP" id="MF_01411">
    <property type="entry name" value="LPS_assembly_LptD"/>
    <property type="match status" value="1"/>
</dbReference>
<dbReference type="InterPro" id="IPR020889">
    <property type="entry name" value="LipoPS_assembly_LptD"/>
</dbReference>
<dbReference type="InterPro" id="IPR050218">
    <property type="entry name" value="LptD"/>
</dbReference>
<dbReference type="InterPro" id="IPR045659">
    <property type="entry name" value="LptD_2"/>
</dbReference>
<dbReference type="InterPro" id="IPR007543">
    <property type="entry name" value="LptD_C"/>
</dbReference>
<dbReference type="PANTHER" id="PTHR30189">
    <property type="entry name" value="LPS-ASSEMBLY PROTEIN"/>
    <property type="match status" value="1"/>
</dbReference>
<dbReference type="PANTHER" id="PTHR30189:SF1">
    <property type="entry name" value="LPS-ASSEMBLY PROTEIN LPTD"/>
    <property type="match status" value="1"/>
</dbReference>
<dbReference type="Pfam" id="PF04453">
    <property type="entry name" value="LptD"/>
    <property type="match status" value="1"/>
</dbReference>
<dbReference type="Pfam" id="PF19838">
    <property type="entry name" value="LptD_2"/>
    <property type="match status" value="1"/>
</dbReference>
<proteinExistence type="inferred from homology"/>
<feature type="signal peptide" evidence="1">
    <location>
        <begin position="1"/>
        <end position="26"/>
    </location>
</feature>
<feature type="chain" id="PRO_0000281587" description="LPS-assembly protein LptD">
    <location>
        <begin position="27"/>
        <end position="817"/>
    </location>
</feature>
<feature type="region of interest" description="Disordered" evidence="2">
    <location>
        <begin position="1"/>
        <end position="101"/>
    </location>
</feature>
<feature type="compositionally biased region" description="Low complexity" evidence="2">
    <location>
        <begin position="13"/>
        <end position="90"/>
    </location>
</feature>
<organism>
    <name type="scientific">Azoarcus sp. (strain BH72)</name>
    <dbReference type="NCBI Taxonomy" id="418699"/>
    <lineage>
        <taxon>Bacteria</taxon>
        <taxon>Pseudomonadati</taxon>
        <taxon>Pseudomonadota</taxon>
        <taxon>Betaproteobacteria</taxon>
        <taxon>Rhodocyclales</taxon>
        <taxon>Zoogloeaceae</taxon>
        <taxon>Azoarcus</taxon>
    </lineage>
</organism>
<name>LPTD_AZOSB</name>
<evidence type="ECO:0000255" key="1">
    <source>
        <dbReference type="HAMAP-Rule" id="MF_01411"/>
    </source>
</evidence>
<evidence type="ECO:0000256" key="2">
    <source>
        <dbReference type="SAM" id="MobiDB-lite"/>
    </source>
</evidence>
<evidence type="ECO:0000305" key="3"/>
<gene>
    <name evidence="1" type="primary">lptD</name>
    <name type="synonym">imp</name>
    <name type="synonym">ostA</name>
    <name type="ordered locus">azo2887</name>
</gene>
<sequence length="817" mass="89598">MPALVVSPDLVRGAAGASAAPTPAPAAATPGRTVRDVTSPVEVRPVEPSSPAAQVPMAPARPAAATGQASPAAAAPASAAPAASASPADATARKPGSTEVRALRIRGTRSVELVAEGDAELQRDDILLTADALTYREPTDEALAEGNVRLRQGPDVISGPSASLVVGERTGDFQSPRYEITRTKAGLEPGDPPRQVSGGGHADVLHFEGENQYRLENATWSTCSVDDPDWYIKARDLQLDYDREIGVAKGGTVVFKDVPFFWMPWAEFPLVGQRQSGVLPPTIGSSNKTGLDLTVPYYWNIAPNYDATITPRYMGRRGLQLGGEFRYLGDSYAGEVRAEWLGRDRITGEQRTLGSLQHRQQITSSLYGSLDINGVSDDDYFEDLSSRVSVASRVNLLREGRLVYVGSPWWSASALVQSYQTLNSDPDNPVTTPYRRVPQLLTTASRPDLPAGLTFNWHGEYVQFAHPDEDHPEGNRFTAYPQLSLPMQRAGFYVTPKVGVHYTRYDLDEPVAGLTDARTSITRTVPIFSVDSGVTFERDAQFFGTAFTQTLEPRLYYLNVPYRRQNDIPLFDTSRYDFGFAQIFAENRYTGGDRIGDANQLTAAVTTRLIDPETGSERMRALVGQRYYFEDQRVTAGEALRTSRRTDVLGGFSGRITRYSTVDTLLQYNPEDNETERFNFTFRYQPEFAKALNLGYRYARSLVSPDGTIGLRDVNVSGQWPLGGGWYGVGRLTHSLKDDRLTEAIAGIEYDGGCWVARVAMHRFATDPNDVTKAVFIQLELNDLASIGSSPVNLIKRSVPGYGKINDPAANRVFGIE</sequence>
<protein>
    <recommendedName>
        <fullName evidence="1">LPS-assembly protein LptD</fullName>
    </recommendedName>
</protein>
<comment type="function">
    <text evidence="1">Together with LptE, is involved in the assembly of lipopolysaccharide (LPS) at the surface of the outer membrane.</text>
</comment>
<comment type="subunit">
    <text evidence="1">Component of the lipopolysaccharide transport and assembly complex. Interacts with LptE and LptA.</text>
</comment>
<comment type="subcellular location">
    <subcellularLocation>
        <location evidence="1">Cell outer membrane</location>
    </subcellularLocation>
</comment>
<comment type="similarity">
    <text evidence="1">Belongs to the LptD family.</text>
</comment>
<comment type="sequence caution" evidence="3">
    <conflict type="erroneous initiation">
        <sequence resource="EMBL-CDS" id="CAL95503"/>
    </conflict>
</comment>
<accession>A1K9J8</accession>